<evidence type="ECO:0000250" key="1">
    <source>
        <dbReference type="UniProtKB" id="Q0JEE2"/>
    </source>
</evidence>
<evidence type="ECO:0000250" key="2">
    <source>
        <dbReference type="UniProtKB" id="Q6QHD1"/>
    </source>
</evidence>
<evidence type="ECO:0000255" key="3">
    <source>
        <dbReference type="PROSITE-ProRule" id="PRU00223"/>
    </source>
</evidence>
<evidence type="ECO:0000255" key="4">
    <source>
        <dbReference type="PROSITE-ProRule" id="PRU00768"/>
    </source>
</evidence>
<evidence type="ECO:0000256" key="5">
    <source>
        <dbReference type="SAM" id="MobiDB-lite"/>
    </source>
</evidence>
<evidence type="ECO:0000269" key="6">
    <source>
    </source>
</evidence>
<evidence type="ECO:0000303" key="7">
    <source>
    </source>
</evidence>
<evidence type="ECO:0000305" key="8"/>
<evidence type="ECO:0000312" key="9">
    <source>
        <dbReference type="EMBL" id="EEC76600.1"/>
    </source>
</evidence>
<feature type="chain" id="PRO_0000436955" description="WRKY transcription factor WRKY51">
    <location>
        <begin position="1"/>
        <end position="330"/>
    </location>
</feature>
<feature type="DNA-binding region" description="WRKY" evidence="3">
    <location>
        <begin position="245"/>
        <end position="311"/>
    </location>
</feature>
<feature type="region of interest" description="Disordered" evidence="5">
    <location>
        <begin position="39"/>
        <end position="61"/>
    </location>
</feature>
<feature type="region of interest" description="Disordered" evidence="5">
    <location>
        <begin position="91"/>
        <end position="117"/>
    </location>
</feature>
<feature type="region of interest" description="Disordered" evidence="5">
    <location>
        <begin position="302"/>
        <end position="330"/>
    </location>
</feature>
<feature type="short sequence motif" description="Nuclear localization signal" evidence="4">
    <location>
        <begin position="74"/>
        <end position="81"/>
    </location>
</feature>
<feature type="compositionally biased region" description="Low complexity" evidence="5">
    <location>
        <begin position="51"/>
        <end position="60"/>
    </location>
</feature>
<feature type="compositionally biased region" description="Low complexity" evidence="5">
    <location>
        <begin position="101"/>
        <end position="117"/>
    </location>
</feature>
<feature type="compositionally biased region" description="Pro residues" evidence="5">
    <location>
        <begin position="318"/>
        <end position="330"/>
    </location>
</feature>
<comment type="function">
    <text evidence="1">Transcription factor. Interacts, when in complex with WRKY71, specifically with the W box (5'-(T)TGAC[CT]-3'), a frequently occurring elicitor-responsive cis-acting element. Represses specifically gibberellic acid (GA)-induced promoters in aleurone cells, probably by interfering with GAM1.</text>
</comment>
<comment type="subcellular location">
    <subcellularLocation>
        <location evidence="1 3">Nucleus</location>
    </subcellularLocation>
    <text evidence="1">Localized in nuclei of aleurone cells.</text>
</comment>
<comment type="tissue specificity">
    <text evidence="1">Highly expressed in aleurone cells. In seeds, predominantly present in the plumule, radicle and scutellum of the embryo.</text>
</comment>
<comment type="induction">
    <text evidence="1 6">Induced by abscisic acid (ABA) in aleurone cells (By similarity) (PubMed:15618416). Accumulates in response to uniconazole, a gibberellic acid (GA) biosynthesis inhibitor (By similarity). Repressed by GA (PubMed:15618416).</text>
</comment>
<comment type="domain">
    <text evidence="2">The WRKY domain is required to bind DNA.</text>
</comment>
<comment type="similarity">
    <text evidence="8">Belongs to the WRKY group II-a family.</text>
</comment>
<gene>
    <name evidence="7" type="primary">WRKY51</name>
    <name evidence="9" type="ORF">OsI_14454</name>
</gene>
<name>WRK51_ORYSI</name>
<sequence length="330" mass="34785">MITMDLMSGYGRVDEQVAIQEAAAAGLRGMEHLILQLSQTGTSERSPAPAPAQEQQQQQQVDCREITDMTVSKFKKVISMLNRTGHARFRRGPVVAQSSGPAASEPAPVRSSPSAVSRPMTLDFTKAASGYGKDAGFSVSGISAASSSFLSSVTGDGSVSNGRGGGSSSLMLPPPPATSCGKPPLSSAAAAMSAGVGHKRKCHDHAHSENIAGGKYGSTGGRCHCSKRRKHRVKRTIRVPAISSKVADIPADDFSWRKYGQKPIKGSPFPRGYYKCSTLRGCPARKHVERDPADPSMLIVTYEGEHRHTPSAAGQDHPPAPPPPLALPLA</sequence>
<proteinExistence type="evidence at transcript level"/>
<reference key="1">
    <citation type="journal article" date="2004" name="Plant Physiol.">
        <title>A rice WRKY gene encodes a transcriptional repressor of the gibberellin signaling pathway in aleurone cells.</title>
        <authorList>
            <person name="Zhang Z.-L."/>
            <person name="Xie Z."/>
            <person name="Zou X."/>
            <person name="Casaretto J."/>
            <person name="Ho T.-H.D."/>
            <person name="Shen Q.J."/>
        </authorList>
    </citation>
    <scope>NUCLEOTIDE SEQUENCE [GENOMIC DNA]</scope>
</reference>
<reference key="2">
    <citation type="journal article" date="2005" name="PLoS Biol.">
        <title>The genomes of Oryza sativa: a history of duplications.</title>
        <authorList>
            <person name="Yu J."/>
            <person name="Wang J."/>
            <person name="Lin W."/>
            <person name="Li S."/>
            <person name="Li H."/>
            <person name="Zhou J."/>
            <person name="Ni P."/>
            <person name="Dong W."/>
            <person name="Hu S."/>
            <person name="Zeng C."/>
            <person name="Zhang J."/>
            <person name="Zhang Y."/>
            <person name="Li R."/>
            <person name="Xu Z."/>
            <person name="Li S."/>
            <person name="Li X."/>
            <person name="Zheng H."/>
            <person name="Cong L."/>
            <person name="Lin L."/>
            <person name="Yin J."/>
            <person name="Geng J."/>
            <person name="Li G."/>
            <person name="Shi J."/>
            <person name="Liu J."/>
            <person name="Lv H."/>
            <person name="Li J."/>
            <person name="Wang J."/>
            <person name="Deng Y."/>
            <person name="Ran L."/>
            <person name="Shi X."/>
            <person name="Wang X."/>
            <person name="Wu Q."/>
            <person name="Li C."/>
            <person name="Ren X."/>
            <person name="Wang J."/>
            <person name="Wang X."/>
            <person name="Li D."/>
            <person name="Liu D."/>
            <person name="Zhang X."/>
            <person name="Ji Z."/>
            <person name="Zhao W."/>
            <person name="Sun Y."/>
            <person name="Zhang Z."/>
            <person name="Bao J."/>
            <person name="Han Y."/>
            <person name="Dong L."/>
            <person name="Ji J."/>
            <person name="Chen P."/>
            <person name="Wu S."/>
            <person name="Liu J."/>
            <person name="Xiao Y."/>
            <person name="Bu D."/>
            <person name="Tan J."/>
            <person name="Yang L."/>
            <person name="Ye C."/>
            <person name="Zhang J."/>
            <person name="Xu J."/>
            <person name="Zhou Y."/>
            <person name="Yu Y."/>
            <person name="Zhang B."/>
            <person name="Zhuang S."/>
            <person name="Wei H."/>
            <person name="Liu B."/>
            <person name="Lei M."/>
            <person name="Yu H."/>
            <person name="Li Y."/>
            <person name="Xu H."/>
            <person name="Wei S."/>
            <person name="He X."/>
            <person name="Fang L."/>
            <person name="Zhang Z."/>
            <person name="Zhang Y."/>
            <person name="Huang X."/>
            <person name="Su Z."/>
            <person name="Tong W."/>
            <person name="Li J."/>
            <person name="Tong Z."/>
            <person name="Li S."/>
            <person name="Ye J."/>
            <person name="Wang L."/>
            <person name="Fang L."/>
            <person name="Lei T."/>
            <person name="Chen C.-S."/>
            <person name="Chen H.-C."/>
            <person name="Xu Z."/>
            <person name="Li H."/>
            <person name="Huang H."/>
            <person name="Zhang F."/>
            <person name="Xu H."/>
            <person name="Li N."/>
            <person name="Zhao C."/>
            <person name="Li S."/>
            <person name="Dong L."/>
            <person name="Huang Y."/>
            <person name="Li L."/>
            <person name="Xi Y."/>
            <person name="Qi Q."/>
            <person name="Li W."/>
            <person name="Zhang B."/>
            <person name="Hu W."/>
            <person name="Zhang Y."/>
            <person name="Tian X."/>
            <person name="Jiao Y."/>
            <person name="Liang X."/>
            <person name="Jin J."/>
            <person name="Gao L."/>
            <person name="Zheng W."/>
            <person name="Hao B."/>
            <person name="Liu S.-M."/>
            <person name="Wang W."/>
            <person name="Yuan L."/>
            <person name="Cao M."/>
            <person name="McDermott J."/>
            <person name="Samudrala R."/>
            <person name="Wang J."/>
            <person name="Wong G.K.-S."/>
            <person name="Yang H."/>
        </authorList>
    </citation>
    <scope>NUCLEOTIDE SEQUENCE [LARGE SCALE GENOMIC DNA]</scope>
    <source>
        <strain>cv. 93-11</strain>
    </source>
</reference>
<reference key="3">
    <citation type="journal article" date="2005" name="Plant Physiol.">
        <title>Annotations and functional analyses of the rice WRKY gene superfamily reveal positive and negative regulators of abscisic acid signaling in aleurone cells.</title>
        <authorList>
            <person name="Xie Z."/>
            <person name="Zhang Z.-L."/>
            <person name="Zou X."/>
            <person name="Huang J."/>
            <person name="Ruas P."/>
            <person name="Thompson D."/>
            <person name="Shen Q.J."/>
        </authorList>
    </citation>
    <scope>INDUCTION BY ABSCISIC ACID</scope>
    <scope>REPRESSION BY GIBBERELLIC ACID</scope>
    <scope>GENE FAMILY</scope>
    <scope>NOMENCLATURE</scope>
</reference>
<dbReference type="EMBL" id="BK005053">
    <property type="protein sequence ID" value="DAA05115.1"/>
    <property type="molecule type" value="Genomic_DNA"/>
</dbReference>
<dbReference type="EMBL" id="CM000128">
    <property type="protein sequence ID" value="EEC76600.1"/>
    <property type="molecule type" value="Genomic_DNA"/>
</dbReference>
<dbReference type="SMR" id="Q6IEN1"/>
<dbReference type="EnsemblPlants" id="BGIOSGA009380-TA">
    <property type="protein sequence ID" value="BGIOSGA009380-PA"/>
    <property type="gene ID" value="BGIOSGA009380"/>
</dbReference>
<dbReference type="EnsemblPlants" id="OsKYG_04g0006780.01">
    <property type="protein sequence ID" value="OsKYG_04g0006780.01"/>
    <property type="gene ID" value="OsKYG_04g0006780"/>
</dbReference>
<dbReference type="EnsemblPlants" id="OsLaMu_04g0006920.01">
    <property type="protein sequence ID" value="OsLaMu_04g0006920.01"/>
    <property type="gene ID" value="OsLaMu_04g0006920"/>
</dbReference>
<dbReference type="EnsemblPlants" id="OsLiXu_04g0006660.01">
    <property type="protein sequence ID" value="OsLiXu_04g0006660.01"/>
    <property type="gene ID" value="OsLiXu_04g0006660"/>
</dbReference>
<dbReference type="EnsemblPlants" id="OsMH63_04G006930_01">
    <property type="protein sequence ID" value="OsMH63_04G006930_01"/>
    <property type="gene ID" value="OsMH63_04G006930"/>
</dbReference>
<dbReference type="EnsemblPlants" id="OsPr106_04g0006910.01">
    <property type="protein sequence ID" value="OsPr106_04g0006910.01"/>
    <property type="gene ID" value="OsPr106_04g0006910"/>
</dbReference>
<dbReference type="EnsemblPlants" id="OsZS97_04G006880_01">
    <property type="protein sequence ID" value="OsZS97_04G006880_01"/>
    <property type="gene ID" value="OsZS97_04G006880"/>
</dbReference>
<dbReference type="Gramene" id="BGIOSGA009380-TA">
    <property type="protein sequence ID" value="BGIOSGA009380-PA"/>
    <property type="gene ID" value="BGIOSGA009380"/>
</dbReference>
<dbReference type="Gramene" id="OsKYG_04g0006780.01">
    <property type="protein sequence ID" value="OsKYG_04g0006780.01"/>
    <property type="gene ID" value="OsKYG_04g0006780"/>
</dbReference>
<dbReference type="Gramene" id="OsLaMu_04g0006920.01">
    <property type="protein sequence ID" value="OsLaMu_04g0006920.01"/>
    <property type="gene ID" value="OsLaMu_04g0006920"/>
</dbReference>
<dbReference type="Gramene" id="OsLiXu_04g0006660.01">
    <property type="protein sequence ID" value="OsLiXu_04g0006660.01"/>
    <property type="gene ID" value="OsLiXu_04g0006660"/>
</dbReference>
<dbReference type="Gramene" id="OsMH63_04G006930_01">
    <property type="protein sequence ID" value="OsMH63_04G006930_01"/>
    <property type="gene ID" value="OsMH63_04G006930"/>
</dbReference>
<dbReference type="Gramene" id="OsPr106_04g0006910.01">
    <property type="protein sequence ID" value="OsPr106_04g0006910.01"/>
    <property type="gene ID" value="OsPr106_04g0006910"/>
</dbReference>
<dbReference type="Gramene" id="OsZS97_04G006880_01">
    <property type="protein sequence ID" value="OsZS97_04G006880_01"/>
    <property type="gene ID" value="OsZS97_04G006880"/>
</dbReference>
<dbReference type="HOGENOM" id="CLU_040478_1_0_1"/>
<dbReference type="OMA" id="TYGGEHR"/>
<dbReference type="Proteomes" id="UP000007015">
    <property type="component" value="Chromosome 3"/>
</dbReference>
<dbReference type="GO" id="GO:0005634">
    <property type="term" value="C:nucleus"/>
    <property type="evidence" value="ECO:0007669"/>
    <property type="project" value="UniProtKB-SubCell"/>
</dbReference>
<dbReference type="GO" id="GO:0003700">
    <property type="term" value="F:DNA-binding transcription factor activity"/>
    <property type="evidence" value="ECO:0007669"/>
    <property type="project" value="InterPro"/>
</dbReference>
<dbReference type="GO" id="GO:0043565">
    <property type="term" value="F:sequence-specific DNA binding"/>
    <property type="evidence" value="ECO:0007669"/>
    <property type="project" value="InterPro"/>
</dbReference>
<dbReference type="FunFam" id="2.20.25.80:FF:000004">
    <property type="entry name" value="WRKY transcription factor 65"/>
    <property type="match status" value="1"/>
</dbReference>
<dbReference type="Gene3D" id="2.20.25.80">
    <property type="entry name" value="WRKY domain"/>
    <property type="match status" value="1"/>
</dbReference>
<dbReference type="InterPro" id="IPR003657">
    <property type="entry name" value="WRKY_dom"/>
</dbReference>
<dbReference type="InterPro" id="IPR036576">
    <property type="entry name" value="WRKY_dom_sf"/>
</dbReference>
<dbReference type="InterPro" id="IPR044810">
    <property type="entry name" value="WRKY_plant"/>
</dbReference>
<dbReference type="InterPro" id="IPR018872">
    <property type="entry name" value="Zn-cluster-dom"/>
</dbReference>
<dbReference type="PANTHER" id="PTHR31282">
    <property type="entry name" value="WRKY TRANSCRIPTION FACTOR 21-RELATED"/>
    <property type="match status" value="1"/>
</dbReference>
<dbReference type="Pfam" id="PF10533">
    <property type="entry name" value="Plant_zn_clust"/>
    <property type="match status" value="1"/>
</dbReference>
<dbReference type="Pfam" id="PF03106">
    <property type="entry name" value="WRKY"/>
    <property type="match status" value="1"/>
</dbReference>
<dbReference type="SMART" id="SM00774">
    <property type="entry name" value="WRKY"/>
    <property type="match status" value="1"/>
</dbReference>
<dbReference type="SUPFAM" id="SSF118290">
    <property type="entry name" value="WRKY DNA-binding domain"/>
    <property type="match status" value="1"/>
</dbReference>
<dbReference type="PROSITE" id="PS50811">
    <property type="entry name" value="WRKY"/>
    <property type="match status" value="1"/>
</dbReference>
<accession>Q6IEN1</accession>
<keyword id="KW-0238">DNA-binding</keyword>
<keyword id="KW-0539">Nucleus</keyword>
<keyword id="KW-1185">Reference proteome</keyword>
<keyword id="KW-0804">Transcription</keyword>
<keyword id="KW-0805">Transcription regulation</keyword>
<protein>
    <recommendedName>
        <fullName evidence="7">WRKY transcription factor WRKY51</fullName>
        <shortName evidence="7">OsWRKY51</shortName>
    </recommendedName>
</protein>
<organism>
    <name type="scientific">Oryza sativa subsp. indica</name>
    <name type="common">Rice</name>
    <dbReference type="NCBI Taxonomy" id="39946"/>
    <lineage>
        <taxon>Eukaryota</taxon>
        <taxon>Viridiplantae</taxon>
        <taxon>Streptophyta</taxon>
        <taxon>Embryophyta</taxon>
        <taxon>Tracheophyta</taxon>
        <taxon>Spermatophyta</taxon>
        <taxon>Magnoliopsida</taxon>
        <taxon>Liliopsida</taxon>
        <taxon>Poales</taxon>
        <taxon>Poaceae</taxon>
        <taxon>BOP clade</taxon>
        <taxon>Oryzoideae</taxon>
        <taxon>Oryzeae</taxon>
        <taxon>Oryzinae</taxon>
        <taxon>Oryza</taxon>
        <taxon>Oryza sativa</taxon>
    </lineage>
</organism>